<sequence length="270" mass="29895">MRLIIQPDYQSVSQWAAHYVAAKIKAANPTPEKPFVLGCPTGSSPLGMYKALIDLNKKGIVSFQNVVTFNMDEYVGLPKEHPESYYSFMWNNFFSHIDIKPENTNILNGNAADLDAECARYEEKIKSYGGIDLFMGGIGPDGHIAFNEPGSSLSSRTRQKTLTTDTIIANSRFFDNDINKVPKTSLTVGVGTVLSAREVMIIVNGHNKARALYHAVEGAITQMWTISALQMHEKGIIVCDDAATAELKVGTYRYFKDIEADHLDPQSLLK</sequence>
<feature type="chain" id="PRO_1000066957" description="Glucosamine-6-phosphate deaminase">
    <location>
        <begin position="1"/>
        <end position="270"/>
    </location>
</feature>
<feature type="active site" description="Proton acceptor; for enolization step" evidence="1">
    <location>
        <position position="72"/>
    </location>
</feature>
<feature type="active site" description="For ring-opening step" evidence="1">
    <location>
        <position position="141"/>
    </location>
</feature>
<feature type="active site" description="Proton acceptor; for ring-opening step" evidence="1">
    <location>
        <position position="143"/>
    </location>
</feature>
<feature type="active site" description="For ring-opening step" evidence="1">
    <location>
        <position position="148"/>
    </location>
</feature>
<feature type="site" description="Part of the allosteric site" evidence="1">
    <location>
        <position position="151"/>
    </location>
</feature>
<feature type="site" description="Part of the allosteric site" evidence="1">
    <location>
        <position position="158"/>
    </location>
</feature>
<feature type="site" description="Part of the allosteric site" evidence="1">
    <location>
        <position position="160"/>
    </location>
</feature>
<feature type="site" description="Part of the allosteric site" evidence="1">
    <location>
        <position position="161"/>
    </location>
</feature>
<feature type="site" description="Part of the allosteric site" evidence="1">
    <location>
        <position position="254"/>
    </location>
</feature>
<organism>
    <name type="scientific">Bacteroides fragilis (strain ATCC 25285 / DSM 2151 / CCUG 4856 / JCM 11019 / LMG 10263 / NCTC 9343 / Onslow / VPI 2553 / EN-2)</name>
    <dbReference type="NCBI Taxonomy" id="272559"/>
    <lineage>
        <taxon>Bacteria</taxon>
        <taxon>Pseudomonadati</taxon>
        <taxon>Bacteroidota</taxon>
        <taxon>Bacteroidia</taxon>
        <taxon>Bacteroidales</taxon>
        <taxon>Bacteroidaceae</taxon>
        <taxon>Bacteroides</taxon>
    </lineage>
</organism>
<comment type="function">
    <text evidence="1">Catalyzes the reversible isomerization-deamination of glucosamine 6-phosphate (GlcN6P) to form fructose 6-phosphate (Fru6P) and ammonium ion.</text>
</comment>
<comment type="catalytic activity">
    <reaction evidence="1">
        <text>alpha-D-glucosamine 6-phosphate + H2O = beta-D-fructose 6-phosphate + NH4(+)</text>
        <dbReference type="Rhea" id="RHEA:12172"/>
        <dbReference type="ChEBI" id="CHEBI:15377"/>
        <dbReference type="ChEBI" id="CHEBI:28938"/>
        <dbReference type="ChEBI" id="CHEBI:57634"/>
        <dbReference type="ChEBI" id="CHEBI:75989"/>
        <dbReference type="EC" id="3.5.99.6"/>
    </reaction>
</comment>
<comment type="activity regulation">
    <text evidence="1">Allosterically activated by N-acetylglucosamine 6-phosphate (GlcNAc6P).</text>
</comment>
<comment type="pathway">
    <text evidence="1">Amino-sugar metabolism; N-acetylneuraminate degradation; D-fructose 6-phosphate from N-acetylneuraminate: step 5/5.</text>
</comment>
<comment type="similarity">
    <text evidence="1">Belongs to the glucosamine/galactosamine-6-phosphate isomerase family. NagB subfamily.</text>
</comment>
<dbReference type="EC" id="3.5.99.6" evidence="1"/>
<dbReference type="EMBL" id="CR626927">
    <property type="protein sequence ID" value="CAH06647.1"/>
    <property type="molecule type" value="Genomic_DNA"/>
</dbReference>
<dbReference type="RefSeq" id="WP_005775719.1">
    <property type="nucleotide sequence ID" value="NZ_UFTH01000001.1"/>
</dbReference>
<dbReference type="SMR" id="Q5LGU0"/>
<dbReference type="PaxDb" id="272559-BF9343_0866"/>
<dbReference type="GeneID" id="93106565"/>
<dbReference type="KEGG" id="bfs:BF9343_0866"/>
<dbReference type="eggNOG" id="COG0363">
    <property type="taxonomic scope" value="Bacteria"/>
</dbReference>
<dbReference type="HOGENOM" id="CLU_049611_0_1_10"/>
<dbReference type="UniPathway" id="UPA00629">
    <property type="reaction ID" value="UER00684"/>
</dbReference>
<dbReference type="Proteomes" id="UP000006731">
    <property type="component" value="Chromosome"/>
</dbReference>
<dbReference type="GO" id="GO:0005737">
    <property type="term" value="C:cytoplasm"/>
    <property type="evidence" value="ECO:0007669"/>
    <property type="project" value="TreeGrafter"/>
</dbReference>
<dbReference type="GO" id="GO:0004342">
    <property type="term" value="F:glucosamine-6-phosphate deaminase activity"/>
    <property type="evidence" value="ECO:0007669"/>
    <property type="project" value="UniProtKB-UniRule"/>
</dbReference>
<dbReference type="GO" id="GO:0042802">
    <property type="term" value="F:identical protein binding"/>
    <property type="evidence" value="ECO:0007669"/>
    <property type="project" value="TreeGrafter"/>
</dbReference>
<dbReference type="GO" id="GO:0005975">
    <property type="term" value="P:carbohydrate metabolic process"/>
    <property type="evidence" value="ECO:0007669"/>
    <property type="project" value="InterPro"/>
</dbReference>
<dbReference type="GO" id="GO:0006043">
    <property type="term" value="P:glucosamine catabolic process"/>
    <property type="evidence" value="ECO:0007669"/>
    <property type="project" value="TreeGrafter"/>
</dbReference>
<dbReference type="GO" id="GO:0006046">
    <property type="term" value="P:N-acetylglucosamine catabolic process"/>
    <property type="evidence" value="ECO:0007669"/>
    <property type="project" value="TreeGrafter"/>
</dbReference>
<dbReference type="GO" id="GO:0019262">
    <property type="term" value="P:N-acetylneuraminate catabolic process"/>
    <property type="evidence" value="ECO:0007669"/>
    <property type="project" value="UniProtKB-UniRule"/>
</dbReference>
<dbReference type="CDD" id="cd01399">
    <property type="entry name" value="GlcN6P_deaminase"/>
    <property type="match status" value="1"/>
</dbReference>
<dbReference type="FunFam" id="3.40.50.1360:FF:000002">
    <property type="entry name" value="Glucosamine-6-phosphate deaminase"/>
    <property type="match status" value="1"/>
</dbReference>
<dbReference type="Gene3D" id="3.40.50.1360">
    <property type="match status" value="1"/>
</dbReference>
<dbReference type="HAMAP" id="MF_01241">
    <property type="entry name" value="GlcN6P_deamin"/>
    <property type="match status" value="1"/>
</dbReference>
<dbReference type="InterPro" id="IPR006148">
    <property type="entry name" value="Glc/Gal-6P_isomerase"/>
</dbReference>
<dbReference type="InterPro" id="IPR004547">
    <property type="entry name" value="Glucosamine6P_isomerase"/>
</dbReference>
<dbReference type="InterPro" id="IPR018321">
    <property type="entry name" value="Glucosamine6P_isomerase_CS"/>
</dbReference>
<dbReference type="InterPro" id="IPR037171">
    <property type="entry name" value="NagB/RpiA_transferase-like"/>
</dbReference>
<dbReference type="NCBIfam" id="TIGR00502">
    <property type="entry name" value="nagB"/>
    <property type="match status" value="1"/>
</dbReference>
<dbReference type="PANTHER" id="PTHR11280">
    <property type="entry name" value="GLUCOSAMINE-6-PHOSPHATE ISOMERASE"/>
    <property type="match status" value="1"/>
</dbReference>
<dbReference type="PANTHER" id="PTHR11280:SF5">
    <property type="entry name" value="GLUCOSAMINE-6-PHOSPHATE ISOMERASE"/>
    <property type="match status" value="1"/>
</dbReference>
<dbReference type="Pfam" id="PF01182">
    <property type="entry name" value="Glucosamine_iso"/>
    <property type="match status" value="1"/>
</dbReference>
<dbReference type="SUPFAM" id="SSF100950">
    <property type="entry name" value="NagB/RpiA/CoA transferase-like"/>
    <property type="match status" value="1"/>
</dbReference>
<dbReference type="PROSITE" id="PS01161">
    <property type="entry name" value="GLC_GALNAC_ISOMERASE"/>
    <property type="match status" value="1"/>
</dbReference>
<proteinExistence type="inferred from homology"/>
<gene>
    <name evidence="1" type="primary">nagB</name>
    <name type="ordered locus">BF0905</name>
</gene>
<evidence type="ECO:0000255" key="1">
    <source>
        <dbReference type="HAMAP-Rule" id="MF_01241"/>
    </source>
</evidence>
<name>NAGB_BACFN</name>
<reference key="1">
    <citation type="journal article" date="2005" name="Science">
        <title>Extensive DNA inversions in the B. fragilis genome control variable gene expression.</title>
        <authorList>
            <person name="Cerdeno-Tarraga A.-M."/>
            <person name="Patrick S."/>
            <person name="Crossman L.C."/>
            <person name="Blakely G."/>
            <person name="Abratt V."/>
            <person name="Lennard N."/>
            <person name="Poxton I."/>
            <person name="Duerden B."/>
            <person name="Harris B."/>
            <person name="Quail M.A."/>
            <person name="Barron A."/>
            <person name="Clark L."/>
            <person name="Corton C."/>
            <person name="Doggett J."/>
            <person name="Holden M.T.G."/>
            <person name="Larke N."/>
            <person name="Line A."/>
            <person name="Lord A."/>
            <person name="Norbertczak H."/>
            <person name="Ormond D."/>
            <person name="Price C."/>
            <person name="Rabbinowitsch E."/>
            <person name="Woodward J."/>
            <person name="Barrell B.G."/>
            <person name="Parkhill J."/>
        </authorList>
    </citation>
    <scope>NUCLEOTIDE SEQUENCE [LARGE SCALE GENOMIC DNA]</scope>
    <source>
        <strain>ATCC 25285 / DSM 2151 / CCUG 4856 / JCM 11019 / LMG 10263 / NCTC 9343 / Onslow / VPI 2553 / EN-2</strain>
    </source>
</reference>
<protein>
    <recommendedName>
        <fullName evidence="1">Glucosamine-6-phosphate deaminase</fullName>
        <ecNumber evidence="1">3.5.99.6</ecNumber>
    </recommendedName>
    <alternativeName>
        <fullName evidence="1">GlcN6P deaminase</fullName>
        <shortName evidence="1">GNPDA</shortName>
    </alternativeName>
    <alternativeName>
        <fullName evidence="1">Glucosamine-6-phosphate isomerase</fullName>
    </alternativeName>
</protein>
<keyword id="KW-0021">Allosteric enzyme</keyword>
<keyword id="KW-0119">Carbohydrate metabolism</keyword>
<keyword id="KW-0378">Hydrolase</keyword>
<accession>Q5LGU0</accession>